<reference key="1">
    <citation type="journal article" date="2007" name="J. Bacteriol.">
        <title>Genome sequence analysis of the emerging human pathogenic acetic acid bacterium Granulibacter bethesdensis.</title>
        <authorList>
            <person name="Greenberg D.E."/>
            <person name="Porcella S.F."/>
            <person name="Zelazny A.M."/>
            <person name="Virtaneva K."/>
            <person name="Sturdevant D.E."/>
            <person name="Kupko J.J. III"/>
            <person name="Barbian K.D."/>
            <person name="Babar A."/>
            <person name="Dorward D.W."/>
            <person name="Holland S.M."/>
        </authorList>
    </citation>
    <scope>NUCLEOTIDE SEQUENCE [LARGE SCALE GENOMIC DNA]</scope>
    <source>
        <strain>ATCC BAA-1260 / CGDNIH1</strain>
    </source>
</reference>
<proteinExistence type="inferred from homology"/>
<gene>
    <name evidence="1" type="primary">rpoC</name>
    <name type="ordered locus">GbCGDNIH1_0549</name>
</gene>
<keyword id="KW-0240">DNA-directed RNA polymerase</keyword>
<keyword id="KW-0460">Magnesium</keyword>
<keyword id="KW-0479">Metal-binding</keyword>
<keyword id="KW-0548">Nucleotidyltransferase</keyword>
<keyword id="KW-1185">Reference proteome</keyword>
<keyword id="KW-0804">Transcription</keyword>
<keyword id="KW-0808">Transferase</keyword>
<keyword id="KW-0862">Zinc</keyword>
<name>RPOC_GRABC</name>
<protein>
    <recommendedName>
        <fullName evidence="1">DNA-directed RNA polymerase subunit beta'</fullName>
        <shortName evidence="1">RNAP subunit beta'</shortName>
        <ecNumber evidence="1">2.7.7.6</ecNumber>
    </recommendedName>
    <alternativeName>
        <fullName evidence="1">RNA polymerase subunit beta'</fullName>
    </alternativeName>
    <alternativeName>
        <fullName evidence="1">Transcriptase subunit beta'</fullName>
    </alternativeName>
</protein>
<evidence type="ECO:0000255" key="1">
    <source>
        <dbReference type="HAMAP-Rule" id="MF_01322"/>
    </source>
</evidence>
<evidence type="ECO:0000256" key="2">
    <source>
        <dbReference type="SAM" id="MobiDB-lite"/>
    </source>
</evidence>
<organism>
    <name type="scientific">Granulibacter bethesdensis (strain ATCC BAA-1260 / CGDNIH1)</name>
    <dbReference type="NCBI Taxonomy" id="391165"/>
    <lineage>
        <taxon>Bacteria</taxon>
        <taxon>Pseudomonadati</taxon>
        <taxon>Pseudomonadota</taxon>
        <taxon>Alphaproteobacteria</taxon>
        <taxon>Acetobacterales</taxon>
        <taxon>Acetobacteraceae</taxon>
        <taxon>Granulibacter</taxon>
    </lineage>
</organism>
<accession>Q0BUQ5</accession>
<comment type="function">
    <text evidence="1">DNA-dependent RNA polymerase catalyzes the transcription of DNA into RNA using the four ribonucleoside triphosphates as substrates.</text>
</comment>
<comment type="catalytic activity">
    <reaction evidence="1">
        <text>RNA(n) + a ribonucleoside 5'-triphosphate = RNA(n+1) + diphosphate</text>
        <dbReference type="Rhea" id="RHEA:21248"/>
        <dbReference type="Rhea" id="RHEA-COMP:14527"/>
        <dbReference type="Rhea" id="RHEA-COMP:17342"/>
        <dbReference type="ChEBI" id="CHEBI:33019"/>
        <dbReference type="ChEBI" id="CHEBI:61557"/>
        <dbReference type="ChEBI" id="CHEBI:140395"/>
        <dbReference type="EC" id="2.7.7.6"/>
    </reaction>
</comment>
<comment type="cofactor">
    <cofactor evidence="1">
        <name>Mg(2+)</name>
        <dbReference type="ChEBI" id="CHEBI:18420"/>
    </cofactor>
    <text evidence="1">Binds 1 Mg(2+) ion per subunit.</text>
</comment>
<comment type="cofactor">
    <cofactor evidence="1">
        <name>Zn(2+)</name>
        <dbReference type="ChEBI" id="CHEBI:29105"/>
    </cofactor>
    <text evidence="1">Binds 2 Zn(2+) ions per subunit.</text>
</comment>
<comment type="subunit">
    <text evidence="1">The RNAP catalytic core consists of 2 alpha, 1 beta, 1 beta' and 1 omega subunit. When a sigma factor is associated with the core the holoenzyme is formed, which can initiate transcription.</text>
</comment>
<comment type="similarity">
    <text evidence="1">Belongs to the RNA polymerase beta' chain family.</text>
</comment>
<dbReference type="EC" id="2.7.7.6" evidence="1"/>
<dbReference type="EMBL" id="CP000394">
    <property type="protein sequence ID" value="ABI61447.1"/>
    <property type="molecule type" value="Genomic_DNA"/>
</dbReference>
<dbReference type="RefSeq" id="WP_011631257.1">
    <property type="nucleotide sequence ID" value="NC_008343.2"/>
</dbReference>
<dbReference type="SMR" id="Q0BUQ5"/>
<dbReference type="STRING" id="391165.GbCGDNIH1_0549"/>
<dbReference type="KEGG" id="gbe:GbCGDNIH1_0549"/>
<dbReference type="eggNOG" id="COG0086">
    <property type="taxonomic scope" value="Bacteria"/>
</dbReference>
<dbReference type="HOGENOM" id="CLU_000524_3_1_5"/>
<dbReference type="OrthoDB" id="9815296at2"/>
<dbReference type="Proteomes" id="UP000001963">
    <property type="component" value="Chromosome"/>
</dbReference>
<dbReference type="GO" id="GO:0000428">
    <property type="term" value="C:DNA-directed RNA polymerase complex"/>
    <property type="evidence" value="ECO:0007669"/>
    <property type="project" value="UniProtKB-KW"/>
</dbReference>
<dbReference type="GO" id="GO:0003677">
    <property type="term" value="F:DNA binding"/>
    <property type="evidence" value="ECO:0007669"/>
    <property type="project" value="UniProtKB-UniRule"/>
</dbReference>
<dbReference type="GO" id="GO:0003899">
    <property type="term" value="F:DNA-directed RNA polymerase activity"/>
    <property type="evidence" value="ECO:0007669"/>
    <property type="project" value="UniProtKB-UniRule"/>
</dbReference>
<dbReference type="GO" id="GO:0000287">
    <property type="term" value="F:magnesium ion binding"/>
    <property type="evidence" value="ECO:0007669"/>
    <property type="project" value="UniProtKB-UniRule"/>
</dbReference>
<dbReference type="GO" id="GO:0008270">
    <property type="term" value="F:zinc ion binding"/>
    <property type="evidence" value="ECO:0007669"/>
    <property type="project" value="UniProtKB-UniRule"/>
</dbReference>
<dbReference type="GO" id="GO:0006351">
    <property type="term" value="P:DNA-templated transcription"/>
    <property type="evidence" value="ECO:0007669"/>
    <property type="project" value="UniProtKB-UniRule"/>
</dbReference>
<dbReference type="CDD" id="cd02655">
    <property type="entry name" value="RNAP_beta'_C"/>
    <property type="match status" value="1"/>
</dbReference>
<dbReference type="CDD" id="cd01609">
    <property type="entry name" value="RNAP_beta'_N"/>
    <property type="match status" value="1"/>
</dbReference>
<dbReference type="FunFam" id="1.10.40.90:FF:000001">
    <property type="entry name" value="DNA-directed RNA polymerase subunit beta"/>
    <property type="match status" value="1"/>
</dbReference>
<dbReference type="FunFam" id="4.10.860.120:FF:000001">
    <property type="entry name" value="DNA-directed RNA polymerase subunit beta"/>
    <property type="match status" value="1"/>
</dbReference>
<dbReference type="Gene3D" id="1.10.132.30">
    <property type="match status" value="1"/>
</dbReference>
<dbReference type="Gene3D" id="1.10.150.390">
    <property type="match status" value="1"/>
</dbReference>
<dbReference type="Gene3D" id="1.10.1790.20">
    <property type="match status" value="1"/>
</dbReference>
<dbReference type="Gene3D" id="1.10.40.90">
    <property type="match status" value="1"/>
</dbReference>
<dbReference type="Gene3D" id="2.40.40.20">
    <property type="match status" value="1"/>
</dbReference>
<dbReference type="Gene3D" id="2.40.50.100">
    <property type="match status" value="3"/>
</dbReference>
<dbReference type="Gene3D" id="4.10.860.120">
    <property type="entry name" value="RNA polymerase II, clamp domain"/>
    <property type="match status" value="1"/>
</dbReference>
<dbReference type="Gene3D" id="1.10.274.100">
    <property type="entry name" value="RNA polymerase Rpb1, domain 3"/>
    <property type="match status" value="2"/>
</dbReference>
<dbReference type="HAMAP" id="MF_01322">
    <property type="entry name" value="RNApol_bact_RpoC"/>
    <property type="match status" value="1"/>
</dbReference>
<dbReference type="InterPro" id="IPR045867">
    <property type="entry name" value="DNA-dir_RpoC_beta_prime"/>
</dbReference>
<dbReference type="InterPro" id="IPR012754">
    <property type="entry name" value="DNA-dir_RpoC_beta_prime_bact"/>
</dbReference>
<dbReference type="InterPro" id="IPR000722">
    <property type="entry name" value="RNA_pol_asu"/>
</dbReference>
<dbReference type="InterPro" id="IPR006592">
    <property type="entry name" value="RNA_pol_N"/>
</dbReference>
<dbReference type="InterPro" id="IPR007080">
    <property type="entry name" value="RNA_pol_Rpb1_1"/>
</dbReference>
<dbReference type="InterPro" id="IPR007066">
    <property type="entry name" value="RNA_pol_Rpb1_3"/>
</dbReference>
<dbReference type="InterPro" id="IPR042102">
    <property type="entry name" value="RNA_pol_Rpb1_3_sf"/>
</dbReference>
<dbReference type="InterPro" id="IPR007083">
    <property type="entry name" value="RNA_pol_Rpb1_4"/>
</dbReference>
<dbReference type="InterPro" id="IPR007081">
    <property type="entry name" value="RNA_pol_Rpb1_5"/>
</dbReference>
<dbReference type="InterPro" id="IPR044893">
    <property type="entry name" value="RNA_pol_Rpb1_clamp_domain"/>
</dbReference>
<dbReference type="InterPro" id="IPR038120">
    <property type="entry name" value="Rpb1_funnel_sf"/>
</dbReference>
<dbReference type="NCBIfam" id="TIGR02386">
    <property type="entry name" value="rpoC_TIGR"/>
    <property type="match status" value="1"/>
</dbReference>
<dbReference type="PANTHER" id="PTHR19376">
    <property type="entry name" value="DNA-DIRECTED RNA POLYMERASE"/>
    <property type="match status" value="1"/>
</dbReference>
<dbReference type="PANTHER" id="PTHR19376:SF54">
    <property type="entry name" value="DNA-DIRECTED RNA POLYMERASE SUBUNIT BETA"/>
    <property type="match status" value="1"/>
</dbReference>
<dbReference type="Pfam" id="PF04997">
    <property type="entry name" value="RNA_pol_Rpb1_1"/>
    <property type="match status" value="1"/>
</dbReference>
<dbReference type="Pfam" id="PF00623">
    <property type="entry name" value="RNA_pol_Rpb1_2"/>
    <property type="match status" value="2"/>
</dbReference>
<dbReference type="Pfam" id="PF04983">
    <property type="entry name" value="RNA_pol_Rpb1_3"/>
    <property type="match status" value="1"/>
</dbReference>
<dbReference type="Pfam" id="PF05000">
    <property type="entry name" value="RNA_pol_Rpb1_4"/>
    <property type="match status" value="1"/>
</dbReference>
<dbReference type="Pfam" id="PF04998">
    <property type="entry name" value="RNA_pol_Rpb1_5"/>
    <property type="match status" value="1"/>
</dbReference>
<dbReference type="SMART" id="SM00663">
    <property type="entry name" value="RPOLA_N"/>
    <property type="match status" value="1"/>
</dbReference>
<dbReference type="SUPFAM" id="SSF64484">
    <property type="entry name" value="beta and beta-prime subunits of DNA dependent RNA-polymerase"/>
    <property type="match status" value="1"/>
</dbReference>
<sequence length="1387" mass="154355">MNELMKILGQGGQSLSFDQIKIQMASPEQIRSWSYGEIKKPETINYRTFKPERDGLFCARIFGPIKDYECLCGKYKRMKFRGIVCEKCGVEVTLAKVRRERMGHIELASPVAHIWFLKSLPSRIGLMVDLTLKELEKILYFENYVVLEPGLTDLKLHQLLTEEQLLNKQDEFGDDAFRAGIGAEAIKSVLEGIDIDEDKVRLRAELKETTSETKRKKLVKRLKLIEAFAESGAKPEWMILDVVPVIPPELRPLVPLDGGRFATSDLNDLYRRVINRNNRLKRLIELRAPDIIVRNEKRMLQESVDALFDNGRRGRAITGANKRPLKSLSDMLKGKQGRFRQNLLGKRVDYSGRSVIVVGPEMKLHQCGLPKKMALELFKPFIYSKLEKYGHATTIKAAKRMVEKERPEVWDILEEVIREHPVMLNRAPTLHRLGIQAFEPVLIEGKAIQLHPLVTTAFNADFDGDQMAVHVPLSLEAQLEARVLMMSTNNILSPANGKPIIVPSQDIVLGLYYLSLETPEFRNTPDDKAQAFGTLGEIEAALHARTVTLHTKIRARLHTVDDQGSPIRVRVVTTPGRMLIAQILPRHPNVPFALINKQLTKKNVSDVIDAVYRHCGQKECVIFADRLMGLGFGQAAKAGISFGKDDLIIPAEKQEMIEKTAGEVKEFEQQYQDGLITAGERYNKVVDAWSRCTDEVAGAMMKEISKQELGRPINSVWMMSHSGARGSPAQMRQLAGMRGLMAKPSGEIIEQPIIANFKEGLSVLEYFNSTHGARKGLADTALKTANSGYLTRRLVDVAQDCIIVENDCGTERGLTVRAVMDGGEVVSSLSERILGRTLSEDVLDPTTNKILYPRNTLIEEEHAEKIEKAGIEVVKIRSVLTCESTVGVCGHCYGRDLARGTPVNIGEAVGVIAAQSIGEPGTQLTMRTFHIGGAAQRGAEQSSVEASHDGIVTVKNRNVVLNSQNVAIVMSRNCEIVLADEKGRERARYRVPYGARLLTDEGAQVTRAQKLAEWDPYTLPIITERAGKVEYLDLLDGVTLVERMDEVTGLTSKVVVDYKQNARGVDLRPRLQLKDESGDVVRLSNNTDARYFLSPDSILSVENGAEVNAGDVLARIPREGSKTRDITGGLPRVAELFEARRPKDHAVIAETDGRVEFGKDYKAKRRIIVKNDETGEETEYLIPKGKHVSVQEGDFVRLGDPLVDGPRVPHDILKVLGVEALSDYLVNEIQDVYRLQGVKINDKHIEVIVRQMLQKVEILDPGDTMYLIGEQVDRLEFEAENRKREREGERPAVAMPVLQGITKASLQTQSFISAASFQETTRVLTEAATAGKVDTLNGLKENVIVGRLIPAGTGSVMNRLRRIASGQDEAKGVGQETPRLSGQEAAE</sequence>
<feature type="chain" id="PRO_0000353376" description="DNA-directed RNA polymerase subunit beta'">
    <location>
        <begin position="1"/>
        <end position="1387"/>
    </location>
</feature>
<feature type="region of interest" description="Disordered" evidence="2">
    <location>
        <begin position="1367"/>
        <end position="1387"/>
    </location>
</feature>
<feature type="binding site" evidence="1">
    <location>
        <position position="70"/>
    </location>
    <ligand>
        <name>Zn(2+)</name>
        <dbReference type="ChEBI" id="CHEBI:29105"/>
        <label>1</label>
    </ligand>
</feature>
<feature type="binding site" evidence="1">
    <location>
        <position position="72"/>
    </location>
    <ligand>
        <name>Zn(2+)</name>
        <dbReference type="ChEBI" id="CHEBI:29105"/>
        <label>1</label>
    </ligand>
</feature>
<feature type="binding site" evidence="1">
    <location>
        <position position="85"/>
    </location>
    <ligand>
        <name>Zn(2+)</name>
        <dbReference type="ChEBI" id="CHEBI:29105"/>
        <label>1</label>
    </ligand>
</feature>
<feature type="binding site" evidence="1">
    <location>
        <position position="88"/>
    </location>
    <ligand>
        <name>Zn(2+)</name>
        <dbReference type="ChEBI" id="CHEBI:29105"/>
        <label>1</label>
    </ligand>
</feature>
<feature type="binding site" evidence="1">
    <location>
        <position position="461"/>
    </location>
    <ligand>
        <name>Mg(2+)</name>
        <dbReference type="ChEBI" id="CHEBI:18420"/>
    </ligand>
</feature>
<feature type="binding site" evidence="1">
    <location>
        <position position="463"/>
    </location>
    <ligand>
        <name>Mg(2+)</name>
        <dbReference type="ChEBI" id="CHEBI:18420"/>
    </ligand>
</feature>
<feature type="binding site" evidence="1">
    <location>
        <position position="465"/>
    </location>
    <ligand>
        <name>Mg(2+)</name>
        <dbReference type="ChEBI" id="CHEBI:18420"/>
    </ligand>
</feature>
<feature type="binding site" evidence="1">
    <location>
        <position position="808"/>
    </location>
    <ligand>
        <name>Zn(2+)</name>
        <dbReference type="ChEBI" id="CHEBI:29105"/>
        <label>2</label>
    </ligand>
</feature>
<feature type="binding site" evidence="1">
    <location>
        <position position="882"/>
    </location>
    <ligand>
        <name>Zn(2+)</name>
        <dbReference type="ChEBI" id="CHEBI:29105"/>
        <label>2</label>
    </ligand>
</feature>
<feature type="binding site" evidence="1">
    <location>
        <position position="889"/>
    </location>
    <ligand>
        <name>Zn(2+)</name>
        <dbReference type="ChEBI" id="CHEBI:29105"/>
        <label>2</label>
    </ligand>
</feature>
<feature type="binding site" evidence="1">
    <location>
        <position position="892"/>
    </location>
    <ligand>
        <name>Zn(2+)</name>
        <dbReference type="ChEBI" id="CHEBI:29105"/>
        <label>2</label>
    </ligand>
</feature>